<evidence type="ECO:0000250" key="1"/>
<evidence type="ECO:0000255" key="2">
    <source>
        <dbReference type="PROSITE-ProRule" id="PRU00169"/>
    </source>
</evidence>
<evidence type="ECO:0000255" key="3">
    <source>
        <dbReference type="PROSITE-ProRule" id="PRU01091"/>
    </source>
</evidence>
<evidence type="ECO:0000269" key="4">
    <source>
    </source>
</evidence>
<evidence type="ECO:0000305" key="5"/>
<reference key="1">
    <citation type="submission" date="1997-04" db="EMBL/GenBank/DDBJ databases">
        <authorList>
            <person name="Denizot F."/>
        </authorList>
    </citation>
    <scope>NUCLEOTIDE SEQUENCE [GENOMIC DNA]</scope>
    <source>
        <strain>168</strain>
    </source>
</reference>
<reference key="2">
    <citation type="journal article" date="1997" name="Nature">
        <title>The complete genome sequence of the Gram-positive bacterium Bacillus subtilis.</title>
        <authorList>
            <person name="Kunst F."/>
            <person name="Ogasawara N."/>
            <person name="Moszer I."/>
            <person name="Albertini A.M."/>
            <person name="Alloni G."/>
            <person name="Azevedo V."/>
            <person name="Bertero M.G."/>
            <person name="Bessieres P."/>
            <person name="Bolotin A."/>
            <person name="Borchert S."/>
            <person name="Borriss R."/>
            <person name="Boursier L."/>
            <person name="Brans A."/>
            <person name="Braun M."/>
            <person name="Brignell S.C."/>
            <person name="Bron S."/>
            <person name="Brouillet S."/>
            <person name="Bruschi C.V."/>
            <person name="Caldwell B."/>
            <person name="Capuano V."/>
            <person name="Carter N.M."/>
            <person name="Choi S.-K."/>
            <person name="Codani J.-J."/>
            <person name="Connerton I.F."/>
            <person name="Cummings N.J."/>
            <person name="Daniel R.A."/>
            <person name="Denizot F."/>
            <person name="Devine K.M."/>
            <person name="Duesterhoeft A."/>
            <person name="Ehrlich S.D."/>
            <person name="Emmerson P.T."/>
            <person name="Entian K.-D."/>
            <person name="Errington J."/>
            <person name="Fabret C."/>
            <person name="Ferrari E."/>
            <person name="Foulger D."/>
            <person name="Fritz C."/>
            <person name="Fujita M."/>
            <person name="Fujita Y."/>
            <person name="Fuma S."/>
            <person name="Galizzi A."/>
            <person name="Galleron N."/>
            <person name="Ghim S.-Y."/>
            <person name="Glaser P."/>
            <person name="Goffeau A."/>
            <person name="Golightly E.J."/>
            <person name="Grandi G."/>
            <person name="Guiseppi G."/>
            <person name="Guy B.J."/>
            <person name="Haga K."/>
            <person name="Haiech J."/>
            <person name="Harwood C.R."/>
            <person name="Henaut A."/>
            <person name="Hilbert H."/>
            <person name="Holsappel S."/>
            <person name="Hosono S."/>
            <person name="Hullo M.-F."/>
            <person name="Itaya M."/>
            <person name="Jones L.-M."/>
            <person name="Joris B."/>
            <person name="Karamata D."/>
            <person name="Kasahara Y."/>
            <person name="Klaerr-Blanchard M."/>
            <person name="Klein C."/>
            <person name="Kobayashi Y."/>
            <person name="Koetter P."/>
            <person name="Koningstein G."/>
            <person name="Krogh S."/>
            <person name="Kumano M."/>
            <person name="Kurita K."/>
            <person name="Lapidus A."/>
            <person name="Lardinois S."/>
            <person name="Lauber J."/>
            <person name="Lazarevic V."/>
            <person name="Lee S.-M."/>
            <person name="Levine A."/>
            <person name="Liu H."/>
            <person name="Masuda S."/>
            <person name="Mauel C."/>
            <person name="Medigue C."/>
            <person name="Medina N."/>
            <person name="Mellado R.P."/>
            <person name="Mizuno M."/>
            <person name="Moestl D."/>
            <person name="Nakai S."/>
            <person name="Noback M."/>
            <person name="Noone D."/>
            <person name="O'Reilly M."/>
            <person name="Ogawa K."/>
            <person name="Ogiwara A."/>
            <person name="Oudega B."/>
            <person name="Park S.-H."/>
            <person name="Parro V."/>
            <person name="Pohl T.M."/>
            <person name="Portetelle D."/>
            <person name="Porwollik S."/>
            <person name="Prescott A.M."/>
            <person name="Presecan E."/>
            <person name="Pujic P."/>
            <person name="Purnelle B."/>
            <person name="Rapoport G."/>
            <person name="Rey M."/>
            <person name="Reynolds S."/>
            <person name="Rieger M."/>
            <person name="Rivolta C."/>
            <person name="Rocha E."/>
            <person name="Roche B."/>
            <person name="Rose M."/>
            <person name="Sadaie Y."/>
            <person name="Sato T."/>
            <person name="Scanlan E."/>
            <person name="Schleich S."/>
            <person name="Schroeter R."/>
            <person name="Scoffone F."/>
            <person name="Sekiguchi J."/>
            <person name="Sekowska A."/>
            <person name="Seror S.J."/>
            <person name="Serror P."/>
            <person name="Shin B.-S."/>
            <person name="Soldo B."/>
            <person name="Sorokin A."/>
            <person name="Tacconi E."/>
            <person name="Takagi T."/>
            <person name="Takahashi H."/>
            <person name="Takemaru K."/>
            <person name="Takeuchi M."/>
            <person name="Tamakoshi A."/>
            <person name="Tanaka T."/>
            <person name="Terpstra P."/>
            <person name="Tognoni A."/>
            <person name="Tosato V."/>
            <person name="Uchiyama S."/>
            <person name="Vandenbol M."/>
            <person name="Vannier F."/>
            <person name="Vassarotti A."/>
            <person name="Viari A."/>
            <person name="Wambutt R."/>
            <person name="Wedler E."/>
            <person name="Wedler H."/>
            <person name="Weitzenegger T."/>
            <person name="Winters P."/>
            <person name="Wipat A."/>
            <person name="Yamamoto H."/>
            <person name="Yamane K."/>
            <person name="Yasumoto K."/>
            <person name="Yata K."/>
            <person name="Yoshida K."/>
            <person name="Yoshikawa H.-F."/>
            <person name="Zumstein E."/>
            <person name="Yoshikawa H."/>
            <person name="Danchin A."/>
        </authorList>
    </citation>
    <scope>NUCLEOTIDE SEQUENCE [LARGE SCALE GENOMIC DNA]</scope>
    <source>
        <strain>168</strain>
    </source>
</reference>
<reference key="3">
    <citation type="journal article" date="2001" name="J. Bacteriol.">
        <title>Comprehensive DNA microarray analysis of Bacillus subtilis two-component regulatory systems.</title>
        <authorList>
            <person name="Kobayashi K."/>
            <person name="Ogura M."/>
            <person name="Yamaguchi H."/>
            <person name="Yoshida K."/>
            <person name="Ogasawara N."/>
            <person name="Tanaka T."/>
            <person name="Fujita Y."/>
        </authorList>
    </citation>
    <scope>FUNCTION</scope>
</reference>
<feature type="chain" id="PRO_0000360777" description="Uncharacterized transcriptional regulatory protein YvcP">
    <location>
        <begin position="1"/>
        <end position="237"/>
    </location>
</feature>
<feature type="domain" description="Response regulatory" evidence="2">
    <location>
        <begin position="3"/>
        <end position="116"/>
    </location>
</feature>
<feature type="DNA-binding region" description="OmpR/PhoB-type" evidence="3">
    <location>
        <begin position="131"/>
        <end position="229"/>
    </location>
</feature>
<feature type="modified residue" description="4-aspartylphosphate" evidence="2">
    <location>
        <position position="52"/>
    </location>
</feature>
<keyword id="KW-0963">Cytoplasm</keyword>
<keyword id="KW-0238">DNA-binding</keyword>
<keyword id="KW-0597">Phosphoprotein</keyword>
<keyword id="KW-1185">Reference proteome</keyword>
<keyword id="KW-0804">Transcription</keyword>
<keyword id="KW-0805">Transcription regulation</keyword>
<keyword id="KW-0902">Two-component regulatory system</keyword>
<proteinExistence type="inferred from homology"/>
<comment type="function">
    <text evidence="4">Member of the two-component regulatory system YvcQ/YvcP.</text>
</comment>
<comment type="subcellular location">
    <subcellularLocation>
        <location evidence="5">Cytoplasm</location>
    </subcellularLocation>
</comment>
<comment type="PTM">
    <text evidence="1">Phosphorylated by YvcQ.</text>
</comment>
<organism>
    <name type="scientific">Bacillus subtilis (strain 168)</name>
    <dbReference type="NCBI Taxonomy" id="224308"/>
    <lineage>
        <taxon>Bacteria</taxon>
        <taxon>Bacillati</taxon>
        <taxon>Bacillota</taxon>
        <taxon>Bacilli</taxon>
        <taxon>Bacillales</taxon>
        <taxon>Bacillaceae</taxon>
        <taxon>Bacillus</taxon>
    </lineage>
</organism>
<accession>O06978</accession>
<accession>Q795G0</accession>
<sequence>MYRILLVEDDERIASLLGGHLQKYGYEVKIAEQLNDIKLEFAEMKPDLVLLDINLPFFDGFYWCRQIRTISNAPIIFISARTDELNQVMAIENGGDDYITKPFHLEVVMAKIKSVLRRTYGEYSPSLPQESRIVELGGLTIYPDQNEAEWNSVRILFSQKEFQLLSIFVREHKKIVSRDELLEALWDDVDFVDDNTLTVNVNRLRRKLENAGLTDCISTIRGQGYQFQVNRKDEAEC</sequence>
<protein>
    <recommendedName>
        <fullName>Uncharacterized transcriptional regulatory protein YvcP</fullName>
    </recommendedName>
</protein>
<gene>
    <name type="primary">yvcP</name>
    <name type="ordered locus">BSU34720</name>
</gene>
<name>YVCP_BACSU</name>
<dbReference type="EMBL" id="Z94043">
    <property type="protein sequence ID" value="CAB08062.1"/>
    <property type="molecule type" value="Genomic_DNA"/>
</dbReference>
<dbReference type="EMBL" id="AL009126">
    <property type="protein sequence ID" value="CAB15477.1"/>
    <property type="molecule type" value="Genomic_DNA"/>
</dbReference>
<dbReference type="PIR" id="D70032">
    <property type="entry name" value="D70032"/>
</dbReference>
<dbReference type="RefSeq" id="WP_003244535.1">
    <property type="nucleotide sequence ID" value="NZ_OZ025638.1"/>
</dbReference>
<dbReference type="SMR" id="O06978"/>
<dbReference type="FunCoup" id="O06978">
    <property type="interactions" value="122"/>
</dbReference>
<dbReference type="STRING" id="224308.BSU34720"/>
<dbReference type="PaxDb" id="224308-BSU34720"/>
<dbReference type="EnsemblBacteria" id="CAB15477">
    <property type="protein sequence ID" value="CAB15477"/>
    <property type="gene ID" value="BSU_34720"/>
</dbReference>
<dbReference type="GeneID" id="936531"/>
<dbReference type="KEGG" id="bsu:BSU34720"/>
<dbReference type="PATRIC" id="fig|224308.179.peg.3759"/>
<dbReference type="eggNOG" id="COG0745">
    <property type="taxonomic scope" value="Bacteria"/>
</dbReference>
<dbReference type="InParanoid" id="O06978"/>
<dbReference type="OrthoDB" id="9790442at2"/>
<dbReference type="PhylomeDB" id="O06978"/>
<dbReference type="BioCyc" id="BSUB:BSU34720-MONOMER"/>
<dbReference type="Proteomes" id="UP000001570">
    <property type="component" value="Chromosome"/>
</dbReference>
<dbReference type="GO" id="GO:0005829">
    <property type="term" value="C:cytosol"/>
    <property type="evidence" value="ECO:0000318"/>
    <property type="project" value="GO_Central"/>
</dbReference>
<dbReference type="GO" id="GO:0032993">
    <property type="term" value="C:protein-DNA complex"/>
    <property type="evidence" value="ECO:0000318"/>
    <property type="project" value="GO_Central"/>
</dbReference>
<dbReference type="GO" id="GO:0000156">
    <property type="term" value="F:phosphorelay response regulator activity"/>
    <property type="evidence" value="ECO:0000318"/>
    <property type="project" value="GO_Central"/>
</dbReference>
<dbReference type="GO" id="GO:0000976">
    <property type="term" value="F:transcription cis-regulatory region binding"/>
    <property type="evidence" value="ECO:0000318"/>
    <property type="project" value="GO_Central"/>
</dbReference>
<dbReference type="GO" id="GO:0006355">
    <property type="term" value="P:regulation of DNA-templated transcription"/>
    <property type="evidence" value="ECO:0000318"/>
    <property type="project" value="GO_Central"/>
</dbReference>
<dbReference type="CDD" id="cd18159">
    <property type="entry name" value="REC_OmpR_NsrR-like"/>
    <property type="match status" value="1"/>
</dbReference>
<dbReference type="CDD" id="cd00383">
    <property type="entry name" value="trans_reg_C"/>
    <property type="match status" value="1"/>
</dbReference>
<dbReference type="FunFam" id="3.40.50.2300:FF:000065">
    <property type="entry name" value="DNA-binding response regulator"/>
    <property type="match status" value="1"/>
</dbReference>
<dbReference type="Gene3D" id="3.40.50.2300">
    <property type="match status" value="1"/>
</dbReference>
<dbReference type="Gene3D" id="6.10.250.690">
    <property type="match status" value="1"/>
</dbReference>
<dbReference type="Gene3D" id="1.10.10.10">
    <property type="entry name" value="Winged helix-like DNA-binding domain superfamily/Winged helix DNA-binding domain"/>
    <property type="match status" value="1"/>
</dbReference>
<dbReference type="InterPro" id="IPR011006">
    <property type="entry name" value="CheY-like_superfamily"/>
</dbReference>
<dbReference type="InterPro" id="IPR001867">
    <property type="entry name" value="OmpR/PhoB-type_DNA-bd"/>
</dbReference>
<dbReference type="InterPro" id="IPR016032">
    <property type="entry name" value="Sig_transdc_resp-reg_C-effctor"/>
</dbReference>
<dbReference type="InterPro" id="IPR001789">
    <property type="entry name" value="Sig_transdc_resp-reg_receiver"/>
</dbReference>
<dbReference type="InterPro" id="IPR039420">
    <property type="entry name" value="WalR-like"/>
</dbReference>
<dbReference type="InterPro" id="IPR036388">
    <property type="entry name" value="WH-like_DNA-bd_sf"/>
</dbReference>
<dbReference type="PANTHER" id="PTHR48111">
    <property type="entry name" value="REGULATOR OF RPOS"/>
    <property type="match status" value="1"/>
</dbReference>
<dbReference type="PANTHER" id="PTHR48111:SF43">
    <property type="entry name" value="STAGE 0 SPORULATION PROTEIN A HOMOLOG"/>
    <property type="match status" value="1"/>
</dbReference>
<dbReference type="Pfam" id="PF00072">
    <property type="entry name" value="Response_reg"/>
    <property type="match status" value="1"/>
</dbReference>
<dbReference type="Pfam" id="PF00486">
    <property type="entry name" value="Trans_reg_C"/>
    <property type="match status" value="1"/>
</dbReference>
<dbReference type="SMART" id="SM00448">
    <property type="entry name" value="REC"/>
    <property type="match status" value="1"/>
</dbReference>
<dbReference type="SMART" id="SM00862">
    <property type="entry name" value="Trans_reg_C"/>
    <property type="match status" value="1"/>
</dbReference>
<dbReference type="SUPFAM" id="SSF46894">
    <property type="entry name" value="C-terminal effector domain of the bipartite response regulators"/>
    <property type="match status" value="1"/>
</dbReference>
<dbReference type="SUPFAM" id="SSF52172">
    <property type="entry name" value="CheY-like"/>
    <property type="match status" value="1"/>
</dbReference>
<dbReference type="PROSITE" id="PS51755">
    <property type="entry name" value="OMPR_PHOB"/>
    <property type="match status" value="1"/>
</dbReference>
<dbReference type="PROSITE" id="PS50110">
    <property type="entry name" value="RESPONSE_REGULATORY"/>
    <property type="match status" value="1"/>
</dbReference>